<sequence>MHDPVEYFQNNLVPMVVEQTSRGERAYDIFSRLLKERIVFVNGPVHSGMSHLIVAQLLHLEAENPSKEISMYINSPGGEVTAGMSIYDTMQYIKPKVSTLVCGMAASMGSVIAVGGEKGMRLALPNAEFLVHQPSGGARGTASDILISARSIEATRERLYQLYVKHTGQDYETVQRALDRDTWMTPEVALEWGHVDEIVTTRGADDAE</sequence>
<accession>Q28NI7</accession>
<gene>
    <name evidence="1" type="primary">clpP</name>
    <name type="ordered locus">Jann_2808</name>
</gene>
<keyword id="KW-0963">Cytoplasm</keyword>
<keyword id="KW-0378">Hydrolase</keyword>
<keyword id="KW-0645">Protease</keyword>
<keyword id="KW-1185">Reference proteome</keyword>
<keyword id="KW-0720">Serine protease</keyword>
<organism>
    <name type="scientific">Jannaschia sp. (strain CCS1)</name>
    <dbReference type="NCBI Taxonomy" id="290400"/>
    <lineage>
        <taxon>Bacteria</taxon>
        <taxon>Pseudomonadati</taxon>
        <taxon>Pseudomonadota</taxon>
        <taxon>Alphaproteobacteria</taxon>
        <taxon>Rhodobacterales</taxon>
        <taxon>Roseobacteraceae</taxon>
        <taxon>Jannaschia</taxon>
    </lineage>
</organism>
<proteinExistence type="inferred from homology"/>
<evidence type="ECO:0000255" key="1">
    <source>
        <dbReference type="HAMAP-Rule" id="MF_00444"/>
    </source>
</evidence>
<name>CLPP_JANSC</name>
<protein>
    <recommendedName>
        <fullName evidence="1">ATP-dependent Clp protease proteolytic subunit</fullName>
        <ecNumber evidence="1">3.4.21.92</ecNumber>
    </recommendedName>
    <alternativeName>
        <fullName evidence="1">Endopeptidase Clp</fullName>
    </alternativeName>
</protein>
<dbReference type="EC" id="3.4.21.92" evidence="1"/>
<dbReference type="EMBL" id="CP000264">
    <property type="protein sequence ID" value="ABD55725.1"/>
    <property type="molecule type" value="Genomic_DNA"/>
</dbReference>
<dbReference type="RefSeq" id="WP_011455929.1">
    <property type="nucleotide sequence ID" value="NC_007802.1"/>
</dbReference>
<dbReference type="SMR" id="Q28NI7"/>
<dbReference type="STRING" id="290400.Jann_2808"/>
<dbReference type="MEROPS" id="S14.001"/>
<dbReference type="KEGG" id="jan:Jann_2808"/>
<dbReference type="eggNOG" id="COG0740">
    <property type="taxonomic scope" value="Bacteria"/>
</dbReference>
<dbReference type="HOGENOM" id="CLU_058707_3_2_5"/>
<dbReference type="OrthoDB" id="9802800at2"/>
<dbReference type="Proteomes" id="UP000008326">
    <property type="component" value="Chromosome"/>
</dbReference>
<dbReference type="GO" id="GO:0005737">
    <property type="term" value="C:cytoplasm"/>
    <property type="evidence" value="ECO:0007669"/>
    <property type="project" value="UniProtKB-SubCell"/>
</dbReference>
<dbReference type="GO" id="GO:0009368">
    <property type="term" value="C:endopeptidase Clp complex"/>
    <property type="evidence" value="ECO:0007669"/>
    <property type="project" value="TreeGrafter"/>
</dbReference>
<dbReference type="GO" id="GO:0004176">
    <property type="term" value="F:ATP-dependent peptidase activity"/>
    <property type="evidence" value="ECO:0007669"/>
    <property type="project" value="InterPro"/>
</dbReference>
<dbReference type="GO" id="GO:0051117">
    <property type="term" value="F:ATPase binding"/>
    <property type="evidence" value="ECO:0007669"/>
    <property type="project" value="TreeGrafter"/>
</dbReference>
<dbReference type="GO" id="GO:0004252">
    <property type="term" value="F:serine-type endopeptidase activity"/>
    <property type="evidence" value="ECO:0007669"/>
    <property type="project" value="UniProtKB-UniRule"/>
</dbReference>
<dbReference type="GO" id="GO:0006515">
    <property type="term" value="P:protein quality control for misfolded or incompletely synthesized proteins"/>
    <property type="evidence" value="ECO:0007669"/>
    <property type="project" value="TreeGrafter"/>
</dbReference>
<dbReference type="CDD" id="cd07017">
    <property type="entry name" value="S14_ClpP_2"/>
    <property type="match status" value="1"/>
</dbReference>
<dbReference type="FunFam" id="3.90.226.10:FF:000001">
    <property type="entry name" value="ATP-dependent Clp protease proteolytic subunit"/>
    <property type="match status" value="1"/>
</dbReference>
<dbReference type="Gene3D" id="3.90.226.10">
    <property type="entry name" value="2-enoyl-CoA Hydratase, Chain A, domain 1"/>
    <property type="match status" value="1"/>
</dbReference>
<dbReference type="HAMAP" id="MF_00444">
    <property type="entry name" value="ClpP"/>
    <property type="match status" value="1"/>
</dbReference>
<dbReference type="InterPro" id="IPR001907">
    <property type="entry name" value="ClpP"/>
</dbReference>
<dbReference type="InterPro" id="IPR029045">
    <property type="entry name" value="ClpP/crotonase-like_dom_sf"/>
</dbReference>
<dbReference type="InterPro" id="IPR023562">
    <property type="entry name" value="ClpP/TepA"/>
</dbReference>
<dbReference type="InterPro" id="IPR033135">
    <property type="entry name" value="ClpP_His_AS"/>
</dbReference>
<dbReference type="NCBIfam" id="NF001368">
    <property type="entry name" value="PRK00277.1"/>
    <property type="match status" value="1"/>
</dbReference>
<dbReference type="NCBIfam" id="NF009205">
    <property type="entry name" value="PRK12553.1"/>
    <property type="match status" value="1"/>
</dbReference>
<dbReference type="PANTHER" id="PTHR10381">
    <property type="entry name" value="ATP-DEPENDENT CLP PROTEASE PROTEOLYTIC SUBUNIT"/>
    <property type="match status" value="1"/>
</dbReference>
<dbReference type="PANTHER" id="PTHR10381:SF70">
    <property type="entry name" value="ATP-DEPENDENT CLP PROTEASE PROTEOLYTIC SUBUNIT"/>
    <property type="match status" value="1"/>
</dbReference>
<dbReference type="Pfam" id="PF00574">
    <property type="entry name" value="CLP_protease"/>
    <property type="match status" value="1"/>
</dbReference>
<dbReference type="PRINTS" id="PR00127">
    <property type="entry name" value="CLPPROTEASEP"/>
</dbReference>
<dbReference type="SUPFAM" id="SSF52096">
    <property type="entry name" value="ClpP/crotonase"/>
    <property type="match status" value="1"/>
</dbReference>
<dbReference type="PROSITE" id="PS00382">
    <property type="entry name" value="CLP_PROTEASE_HIS"/>
    <property type="match status" value="1"/>
</dbReference>
<feature type="chain" id="PRO_0000252821" description="ATP-dependent Clp protease proteolytic subunit">
    <location>
        <begin position="1"/>
        <end position="208"/>
    </location>
</feature>
<feature type="active site" description="Nucleophile" evidence="1">
    <location>
        <position position="107"/>
    </location>
</feature>
<feature type="active site" evidence="1">
    <location>
        <position position="132"/>
    </location>
</feature>
<reference key="1">
    <citation type="submission" date="2006-02" db="EMBL/GenBank/DDBJ databases">
        <title>Complete sequence of chromosome of Jannaschia sp. CCS1.</title>
        <authorList>
            <consortium name="US DOE Joint Genome Institute"/>
            <person name="Copeland A."/>
            <person name="Lucas S."/>
            <person name="Lapidus A."/>
            <person name="Barry K."/>
            <person name="Detter J.C."/>
            <person name="Glavina del Rio T."/>
            <person name="Hammon N."/>
            <person name="Israni S."/>
            <person name="Pitluck S."/>
            <person name="Brettin T."/>
            <person name="Bruce D."/>
            <person name="Han C."/>
            <person name="Tapia R."/>
            <person name="Gilna P."/>
            <person name="Chertkov O."/>
            <person name="Saunders E."/>
            <person name="Schmutz J."/>
            <person name="Larimer F."/>
            <person name="Land M."/>
            <person name="Kyrpides N."/>
            <person name="Lykidis A."/>
            <person name="Moran M.A."/>
            <person name="Belas R."/>
            <person name="Ye W."/>
            <person name="Buchan A."/>
            <person name="Gonzalez J.M."/>
            <person name="Schell M.A."/>
            <person name="Richardson P."/>
        </authorList>
    </citation>
    <scope>NUCLEOTIDE SEQUENCE [LARGE SCALE GENOMIC DNA]</scope>
    <source>
        <strain>CCS1</strain>
    </source>
</reference>
<comment type="function">
    <text evidence="1">Cleaves peptides in various proteins in a process that requires ATP hydrolysis. Has a chymotrypsin-like activity. Plays a major role in the degradation of misfolded proteins.</text>
</comment>
<comment type="catalytic activity">
    <reaction evidence="1">
        <text>Hydrolysis of proteins to small peptides in the presence of ATP and magnesium. alpha-casein is the usual test substrate. In the absence of ATP, only oligopeptides shorter than five residues are hydrolyzed (such as succinyl-Leu-Tyr-|-NHMec, and Leu-Tyr-Leu-|-Tyr-Trp, in which cleavage of the -Tyr-|-Leu- and -Tyr-|-Trp bonds also occurs).</text>
        <dbReference type="EC" id="3.4.21.92"/>
    </reaction>
</comment>
<comment type="subunit">
    <text evidence="1">Fourteen ClpP subunits assemble into 2 heptameric rings which stack back to back to give a disk-like structure with a central cavity, resembling the structure of eukaryotic proteasomes.</text>
</comment>
<comment type="subcellular location">
    <subcellularLocation>
        <location evidence="1">Cytoplasm</location>
    </subcellularLocation>
</comment>
<comment type="similarity">
    <text evidence="1">Belongs to the peptidase S14 family.</text>
</comment>